<dbReference type="EC" id="2.7.1.50" evidence="1"/>
<dbReference type="EMBL" id="AE000511">
    <property type="protein sequence ID" value="AAD07891.1"/>
    <property type="status" value="ALT_INIT"/>
    <property type="molecule type" value="Genomic_DNA"/>
</dbReference>
<dbReference type="PIR" id="E64625">
    <property type="entry name" value="E64625"/>
</dbReference>
<dbReference type="RefSeq" id="NP_207638.1">
    <property type="nucleotide sequence ID" value="NC_000915.1"/>
</dbReference>
<dbReference type="RefSeq" id="WP_015056066.1">
    <property type="nucleotide sequence ID" value="NC_018939.1"/>
</dbReference>
<dbReference type="SMR" id="O25516"/>
<dbReference type="FunCoup" id="O25516">
    <property type="interactions" value="133"/>
</dbReference>
<dbReference type="IntAct" id="O25516">
    <property type="interactions" value="1"/>
</dbReference>
<dbReference type="STRING" id="85962.HP_0845"/>
<dbReference type="PaxDb" id="85962-C694_04330"/>
<dbReference type="EnsemblBacteria" id="AAD07891">
    <property type="protein sequence ID" value="AAD07891"/>
    <property type="gene ID" value="HP_0845"/>
</dbReference>
<dbReference type="KEGG" id="heo:C694_04330"/>
<dbReference type="KEGG" id="hpy:HP_0845"/>
<dbReference type="PATRIC" id="fig|85962.47.peg.899"/>
<dbReference type="eggNOG" id="COG2145">
    <property type="taxonomic scope" value="Bacteria"/>
</dbReference>
<dbReference type="InParanoid" id="O25516"/>
<dbReference type="OrthoDB" id="8909021at2"/>
<dbReference type="PhylomeDB" id="O25516"/>
<dbReference type="UniPathway" id="UPA00060">
    <property type="reaction ID" value="UER00139"/>
</dbReference>
<dbReference type="Proteomes" id="UP000000429">
    <property type="component" value="Chromosome"/>
</dbReference>
<dbReference type="GO" id="GO:0005524">
    <property type="term" value="F:ATP binding"/>
    <property type="evidence" value="ECO:0007669"/>
    <property type="project" value="UniProtKB-UniRule"/>
</dbReference>
<dbReference type="GO" id="GO:0004417">
    <property type="term" value="F:hydroxyethylthiazole kinase activity"/>
    <property type="evidence" value="ECO:0007669"/>
    <property type="project" value="UniProtKB-UniRule"/>
</dbReference>
<dbReference type="GO" id="GO:0000287">
    <property type="term" value="F:magnesium ion binding"/>
    <property type="evidence" value="ECO:0007669"/>
    <property type="project" value="UniProtKB-UniRule"/>
</dbReference>
<dbReference type="GO" id="GO:0009228">
    <property type="term" value="P:thiamine biosynthetic process"/>
    <property type="evidence" value="ECO:0007669"/>
    <property type="project" value="UniProtKB-KW"/>
</dbReference>
<dbReference type="GO" id="GO:0009229">
    <property type="term" value="P:thiamine diphosphate biosynthetic process"/>
    <property type="evidence" value="ECO:0007669"/>
    <property type="project" value="UniProtKB-UniRule"/>
</dbReference>
<dbReference type="CDD" id="cd01170">
    <property type="entry name" value="THZ_kinase"/>
    <property type="match status" value="1"/>
</dbReference>
<dbReference type="Gene3D" id="3.40.1190.20">
    <property type="match status" value="1"/>
</dbReference>
<dbReference type="HAMAP" id="MF_00228">
    <property type="entry name" value="Thz_kinase"/>
    <property type="match status" value="1"/>
</dbReference>
<dbReference type="InterPro" id="IPR000417">
    <property type="entry name" value="Hyethyz_kinase"/>
</dbReference>
<dbReference type="InterPro" id="IPR029056">
    <property type="entry name" value="Ribokinase-like"/>
</dbReference>
<dbReference type="NCBIfam" id="NF006830">
    <property type="entry name" value="PRK09355.1"/>
    <property type="match status" value="1"/>
</dbReference>
<dbReference type="NCBIfam" id="TIGR00694">
    <property type="entry name" value="thiM"/>
    <property type="match status" value="1"/>
</dbReference>
<dbReference type="Pfam" id="PF02110">
    <property type="entry name" value="HK"/>
    <property type="match status" value="1"/>
</dbReference>
<dbReference type="PIRSF" id="PIRSF000513">
    <property type="entry name" value="Thz_kinase"/>
    <property type="match status" value="1"/>
</dbReference>
<dbReference type="PRINTS" id="PR01099">
    <property type="entry name" value="HYETHTZKNASE"/>
</dbReference>
<dbReference type="SUPFAM" id="SSF53613">
    <property type="entry name" value="Ribokinase-like"/>
    <property type="match status" value="1"/>
</dbReference>
<evidence type="ECO:0000255" key="1">
    <source>
        <dbReference type="HAMAP-Rule" id="MF_00228"/>
    </source>
</evidence>
<evidence type="ECO:0000305" key="2"/>
<proteinExistence type="inferred from homology"/>
<reference key="1">
    <citation type="journal article" date="1997" name="Nature">
        <title>The complete genome sequence of the gastric pathogen Helicobacter pylori.</title>
        <authorList>
            <person name="Tomb J.-F."/>
            <person name="White O."/>
            <person name="Kerlavage A.R."/>
            <person name="Clayton R.A."/>
            <person name="Sutton G.G."/>
            <person name="Fleischmann R.D."/>
            <person name="Ketchum K.A."/>
            <person name="Klenk H.-P."/>
            <person name="Gill S.R."/>
            <person name="Dougherty B.A."/>
            <person name="Nelson K.E."/>
            <person name="Quackenbush J."/>
            <person name="Zhou L."/>
            <person name="Kirkness E.F."/>
            <person name="Peterson S.N."/>
            <person name="Loftus B.J."/>
            <person name="Richardson D.L."/>
            <person name="Dodson R.J."/>
            <person name="Khalak H.G."/>
            <person name="Glodek A."/>
            <person name="McKenney K."/>
            <person name="FitzGerald L.M."/>
            <person name="Lee N."/>
            <person name="Adams M.D."/>
            <person name="Hickey E.K."/>
            <person name="Berg D.E."/>
            <person name="Gocayne J.D."/>
            <person name="Utterback T.R."/>
            <person name="Peterson J.D."/>
            <person name="Kelley J.M."/>
            <person name="Cotton M.D."/>
            <person name="Weidman J.F."/>
            <person name="Fujii C."/>
            <person name="Bowman C."/>
            <person name="Watthey L."/>
            <person name="Wallin E."/>
            <person name="Hayes W.S."/>
            <person name="Borodovsky M."/>
            <person name="Karp P.D."/>
            <person name="Smith H.O."/>
            <person name="Fraser C.M."/>
            <person name="Venter J.C."/>
        </authorList>
    </citation>
    <scope>NUCLEOTIDE SEQUENCE [LARGE SCALE GENOMIC DNA]</scope>
    <source>
        <strain>ATCC 700392 / 26695</strain>
    </source>
</reference>
<organism>
    <name type="scientific">Helicobacter pylori (strain ATCC 700392 / 26695)</name>
    <name type="common">Campylobacter pylori</name>
    <dbReference type="NCBI Taxonomy" id="85962"/>
    <lineage>
        <taxon>Bacteria</taxon>
        <taxon>Pseudomonadati</taxon>
        <taxon>Campylobacterota</taxon>
        <taxon>Epsilonproteobacteria</taxon>
        <taxon>Campylobacterales</taxon>
        <taxon>Helicobacteraceae</taxon>
        <taxon>Helicobacter</taxon>
    </lineage>
</organism>
<accession>O25516</accession>
<name>THIM_HELPY</name>
<keyword id="KW-0067">ATP-binding</keyword>
<keyword id="KW-0418">Kinase</keyword>
<keyword id="KW-0460">Magnesium</keyword>
<keyword id="KW-0479">Metal-binding</keyword>
<keyword id="KW-0547">Nucleotide-binding</keyword>
<keyword id="KW-1185">Reference proteome</keyword>
<keyword id="KW-0784">Thiamine biosynthesis</keyword>
<keyword id="KW-0808">Transferase</keyword>
<gene>
    <name evidence="1" type="primary">thiM</name>
    <name type="ordered locus">HP_0845</name>
</gene>
<sequence>MLKELRQKRPLVHNITNYVAAQFVANGLLALGASPLMSDAIDEMRDLAKISDALAINIGTLNDRAILCAKEAIKHYKALNKPIVLDPVGCSASALRHDTSLELLKSGGISALRGNAAELGSLVGISCESKGLDSNDAATPVEIIKLAAQKYSVIAVMTGKTDYVSDGKKVLSITGGSEYLALITGAGCLHAAACASFLSLKKDPLDSMAQLCALYKQAAFNAQKKVLENNGSNGSFLFYFLDALSLPIELENSLIKEEW</sequence>
<protein>
    <recommendedName>
        <fullName evidence="1">Hydroxyethylthiazole kinase</fullName>
        <ecNumber evidence="1">2.7.1.50</ecNumber>
    </recommendedName>
    <alternativeName>
        <fullName evidence="1">4-methyl-5-beta-hydroxyethylthiazole kinase</fullName>
        <shortName evidence="1">TH kinase</shortName>
        <shortName evidence="1">Thz kinase</shortName>
    </alternativeName>
</protein>
<comment type="function">
    <text evidence="1">Catalyzes the phosphorylation of the hydroxyl group of 4-methyl-5-beta-hydroxyethylthiazole (THZ).</text>
</comment>
<comment type="catalytic activity">
    <reaction evidence="1">
        <text>5-(2-hydroxyethyl)-4-methylthiazole + ATP = 4-methyl-5-(2-phosphooxyethyl)-thiazole + ADP + H(+)</text>
        <dbReference type="Rhea" id="RHEA:24212"/>
        <dbReference type="ChEBI" id="CHEBI:15378"/>
        <dbReference type="ChEBI" id="CHEBI:17957"/>
        <dbReference type="ChEBI" id="CHEBI:30616"/>
        <dbReference type="ChEBI" id="CHEBI:58296"/>
        <dbReference type="ChEBI" id="CHEBI:456216"/>
        <dbReference type="EC" id="2.7.1.50"/>
    </reaction>
</comment>
<comment type="cofactor">
    <cofactor evidence="1">
        <name>Mg(2+)</name>
        <dbReference type="ChEBI" id="CHEBI:18420"/>
    </cofactor>
</comment>
<comment type="pathway">
    <text evidence="1">Cofactor biosynthesis; thiamine diphosphate biosynthesis; 4-methyl-5-(2-phosphoethyl)-thiazole from 5-(2-hydroxyethyl)-4-methylthiazole: step 1/1.</text>
</comment>
<comment type="similarity">
    <text evidence="1">Belongs to the Thz kinase family.</text>
</comment>
<comment type="sequence caution" evidence="2">
    <conflict type="erroneous initiation">
        <sequence resource="EMBL-CDS" id="AAD07891"/>
    </conflict>
</comment>
<feature type="chain" id="PRO_0000156937" description="Hydroxyethylthiazole kinase">
    <location>
        <begin position="1"/>
        <end position="259"/>
    </location>
</feature>
<feature type="binding site" evidence="1">
    <location>
        <position position="37"/>
    </location>
    <ligand>
        <name>substrate</name>
    </ligand>
</feature>
<feature type="binding site" evidence="1">
    <location>
        <position position="113"/>
    </location>
    <ligand>
        <name>ATP</name>
        <dbReference type="ChEBI" id="CHEBI:30616"/>
    </ligand>
</feature>
<feature type="binding site" evidence="1">
    <location>
        <position position="158"/>
    </location>
    <ligand>
        <name>ATP</name>
        <dbReference type="ChEBI" id="CHEBI:30616"/>
    </ligand>
</feature>
<feature type="binding site" evidence="1">
    <location>
        <position position="185"/>
    </location>
    <ligand>
        <name>substrate</name>
    </ligand>
</feature>